<proteinExistence type="inferred from homology"/>
<accession>Q3V5Z9</accession>
<name>HXD3_ORYLA</name>
<gene>
    <name type="primary">hoxd3a</name>
</gene>
<protein>
    <recommendedName>
        <fullName>Homeobox protein Hox-D3</fullName>
    </recommendedName>
</protein>
<keyword id="KW-0217">Developmental protein</keyword>
<keyword id="KW-0238">DNA-binding</keyword>
<keyword id="KW-0371">Homeobox</keyword>
<keyword id="KW-0539">Nucleus</keyword>
<keyword id="KW-1185">Reference proteome</keyword>
<keyword id="KW-0804">Transcription</keyword>
<keyword id="KW-0805">Transcription regulation</keyword>
<sequence>MQKATYYDNSGLFGGYSYPKPDSYSYGPAHQSYPTANIESDYQGPVCPIQTPAVRPPALKDTDLNGDCMRQSSSQSSNSGTQAGSISEQQAPPLSASPPSSNSSASQKKKSPSGGASGAATPALTKQIFPWMKETRQNSKQKSNNCGEVSDEKSPPGPASKRVRTAYTSAQLVELEKEFHFNRYLCRPRRVEMANLLNLTERQIKIWFQNRRMKYKKDQKSKGLAHSPLGHSPDRSPPLSGPNHVGYSGQLQNVNSLSYDAPSPPSFAKPQQNMYGLAAYTAPLGGCIPQQKRYPGSEYEHHGMQSNGGFANANLQGSPVYVGGNFVDSMPASGPMFNLGHLPHPSSTSVDYSCAAQIPGNHHHGPCDPHPTYTDLTSHQASQGRIQEAPKLTHL</sequence>
<evidence type="ECO:0000250" key="1"/>
<evidence type="ECO:0000255" key="2">
    <source>
        <dbReference type="PROSITE-ProRule" id="PRU00108"/>
    </source>
</evidence>
<evidence type="ECO:0000256" key="3">
    <source>
        <dbReference type="SAM" id="MobiDB-lite"/>
    </source>
</evidence>
<evidence type="ECO:0000305" key="4"/>
<comment type="function">
    <text evidence="1">Sequence-specific transcription factor which is part of a developmental regulatory system that provides cells with specific positional identities on the anterior-posterior axis.</text>
</comment>
<comment type="subcellular location">
    <subcellularLocation>
        <location evidence="2">Nucleus</location>
    </subcellularLocation>
</comment>
<comment type="similarity">
    <text evidence="4">Belongs to the Antp homeobox family.</text>
</comment>
<feature type="chain" id="PRO_0000363947" description="Homeobox protein Hox-D3">
    <location>
        <begin position="1"/>
        <end position="395"/>
    </location>
</feature>
<feature type="DNA-binding region" description="Homeobox" evidence="2">
    <location>
        <begin position="160"/>
        <end position="219"/>
    </location>
</feature>
<feature type="region of interest" description="Disordered" evidence="3">
    <location>
        <begin position="1"/>
        <end position="122"/>
    </location>
</feature>
<feature type="region of interest" description="Disordered" evidence="3">
    <location>
        <begin position="135"/>
        <end position="163"/>
    </location>
</feature>
<feature type="region of interest" description="Disordered" evidence="3">
    <location>
        <begin position="217"/>
        <end position="247"/>
    </location>
</feature>
<feature type="region of interest" description="Disordered" evidence="3">
    <location>
        <begin position="363"/>
        <end position="395"/>
    </location>
</feature>
<feature type="short sequence motif" description="Antp-type hexapeptide">
    <location>
        <begin position="128"/>
        <end position="133"/>
    </location>
</feature>
<feature type="compositionally biased region" description="Low complexity" evidence="3">
    <location>
        <begin position="71"/>
        <end position="122"/>
    </location>
</feature>
<feature type="compositionally biased region" description="Polar residues" evidence="3">
    <location>
        <begin position="138"/>
        <end position="147"/>
    </location>
</feature>
<feature type="compositionally biased region" description="Polar residues" evidence="3">
    <location>
        <begin position="374"/>
        <end position="385"/>
    </location>
</feature>
<organism>
    <name type="scientific">Oryzias latipes</name>
    <name type="common">Japanese rice fish</name>
    <name type="synonym">Japanese killifish</name>
    <dbReference type="NCBI Taxonomy" id="8090"/>
    <lineage>
        <taxon>Eukaryota</taxon>
        <taxon>Metazoa</taxon>
        <taxon>Chordata</taxon>
        <taxon>Craniata</taxon>
        <taxon>Vertebrata</taxon>
        <taxon>Euteleostomi</taxon>
        <taxon>Actinopterygii</taxon>
        <taxon>Neopterygii</taxon>
        <taxon>Teleostei</taxon>
        <taxon>Neoteleostei</taxon>
        <taxon>Acanthomorphata</taxon>
        <taxon>Ovalentaria</taxon>
        <taxon>Atherinomorphae</taxon>
        <taxon>Beloniformes</taxon>
        <taxon>Adrianichthyidae</taxon>
        <taxon>Oryziinae</taxon>
        <taxon>Oryzias</taxon>
    </lineage>
</organism>
<dbReference type="EMBL" id="AB208013">
    <property type="protein sequence ID" value="BAE44287.1"/>
    <property type="molecule type" value="Genomic_DNA"/>
</dbReference>
<dbReference type="EMBL" id="AB232923">
    <property type="protein sequence ID" value="BAE53501.1"/>
    <property type="molecule type" value="Genomic_DNA"/>
</dbReference>
<dbReference type="SMR" id="Q3V5Z9"/>
<dbReference type="FunCoup" id="Q3V5Z9">
    <property type="interactions" value="132"/>
</dbReference>
<dbReference type="STRING" id="8090.ENSORLP00000021951"/>
<dbReference type="eggNOG" id="KOG0489">
    <property type="taxonomic scope" value="Eukaryota"/>
</dbReference>
<dbReference type="InParanoid" id="Q3V5Z9"/>
<dbReference type="Proteomes" id="UP000001038">
    <property type="component" value="Unplaced"/>
</dbReference>
<dbReference type="Proteomes" id="UP000265180">
    <property type="component" value="Chromosome 9"/>
</dbReference>
<dbReference type="Proteomes" id="UP000265200">
    <property type="component" value="Chromosome 9"/>
</dbReference>
<dbReference type="GO" id="GO:0005634">
    <property type="term" value="C:nucleus"/>
    <property type="evidence" value="ECO:0000318"/>
    <property type="project" value="GO_Central"/>
</dbReference>
<dbReference type="GO" id="GO:0000981">
    <property type="term" value="F:DNA-binding transcription factor activity, RNA polymerase II-specific"/>
    <property type="evidence" value="ECO:0000318"/>
    <property type="project" value="GO_Central"/>
</dbReference>
<dbReference type="GO" id="GO:0000978">
    <property type="term" value="F:RNA polymerase II cis-regulatory region sequence-specific DNA binding"/>
    <property type="evidence" value="ECO:0000318"/>
    <property type="project" value="GO_Central"/>
</dbReference>
<dbReference type="GO" id="GO:0009952">
    <property type="term" value="P:anterior/posterior pattern specification"/>
    <property type="evidence" value="ECO:0000318"/>
    <property type="project" value="GO_Central"/>
</dbReference>
<dbReference type="GO" id="GO:0048704">
    <property type="term" value="P:embryonic skeletal system morphogenesis"/>
    <property type="evidence" value="ECO:0000318"/>
    <property type="project" value="GO_Central"/>
</dbReference>
<dbReference type="GO" id="GO:0006357">
    <property type="term" value="P:regulation of transcription by RNA polymerase II"/>
    <property type="evidence" value="ECO:0000318"/>
    <property type="project" value="GO_Central"/>
</dbReference>
<dbReference type="CDD" id="cd00086">
    <property type="entry name" value="homeodomain"/>
    <property type="match status" value="1"/>
</dbReference>
<dbReference type="FunFam" id="1.10.10.60:FF:000094">
    <property type="entry name" value="Homeobox protein Hox-A3"/>
    <property type="match status" value="1"/>
</dbReference>
<dbReference type="Gene3D" id="1.10.10.60">
    <property type="entry name" value="Homeodomain-like"/>
    <property type="match status" value="1"/>
</dbReference>
<dbReference type="InterPro" id="IPR025281">
    <property type="entry name" value="DUF4074"/>
</dbReference>
<dbReference type="InterPro" id="IPR001356">
    <property type="entry name" value="HD"/>
</dbReference>
<dbReference type="InterPro" id="IPR020479">
    <property type="entry name" value="HD_metazoa"/>
</dbReference>
<dbReference type="InterPro" id="IPR001827">
    <property type="entry name" value="Homeobox_Antennapedia_CS"/>
</dbReference>
<dbReference type="InterPro" id="IPR017970">
    <property type="entry name" value="Homeobox_CS"/>
</dbReference>
<dbReference type="InterPro" id="IPR009057">
    <property type="entry name" value="Homeodomain-like_sf"/>
</dbReference>
<dbReference type="PANTHER" id="PTHR45664:SF5">
    <property type="entry name" value="HOMEOBOX PROTEIN HOX-D3"/>
    <property type="match status" value="1"/>
</dbReference>
<dbReference type="PANTHER" id="PTHR45664">
    <property type="entry name" value="PROTEIN ZERKNUELLT 1-RELATED"/>
    <property type="match status" value="1"/>
</dbReference>
<dbReference type="Pfam" id="PF13293">
    <property type="entry name" value="DUF4074"/>
    <property type="match status" value="1"/>
</dbReference>
<dbReference type="Pfam" id="PF00046">
    <property type="entry name" value="Homeodomain"/>
    <property type="match status" value="1"/>
</dbReference>
<dbReference type="PRINTS" id="PR00024">
    <property type="entry name" value="HOMEOBOX"/>
</dbReference>
<dbReference type="SMART" id="SM00389">
    <property type="entry name" value="HOX"/>
    <property type="match status" value="1"/>
</dbReference>
<dbReference type="SUPFAM" id="SSF46689">
    <property type="entry name" value="Homeodomain-like"/>
    <property type="match status" value="1"/>
</dbReference>
<dbReference type="PROSITE" id="PS00032">
    <property type="entry name" value="ANTENNAPEDIA"/>
    <property type="match status" value="1"/>
</dbReference>
<dbReference type="PROSITE" id="PS00027">
    <property type="entry name" value="HOMEOBOX_1"/>
    <property type="match status" value="1"/>
</dbReference>
<dbReference type="PROSITE" id="PS50071">
    <property type="entry name" value="HOMEOBOX_2"/>
    <property type="match status" value="1"/>
</dbReference>
<reference key="1">
    <citation type="journal article" date="2006" name="Gene">
        <title>Organization and structure of hox gene loci in medaka genome and comparison with those of pufferfish and zebrafish genomes.</title>
        <authorList>
            <person name="Kurosawa G."/>
            <person name="Takamatsu N."/>
            <person name="Takahashi M."/>
            <person name="Sumitomo M."/>
            <person name="Sanaka E."/>
            <person name="Yamada K."/>
            <person name="Nishii K."/>
            <person name="Matsuda M."/>
            <person name="Asakawa S."/>
            <person name="Ishiguro H."/>
            <person name="Miura K."/>
            <person name="Kurosawa Y."/>
            <person name="Shimizu N."/>
            <person name="Kohara Y."/>
            <person name="Hori H."/>
        </authorList>
    </citation>
    <scope>NUCLEOTIDE SEQUENCE [GENOMIC DNA]</scope>
    <source>
        <strain>Hd-rR</strain>
    </source>
</reference>